<dbReference type="EMBL" id="AJ006589">
    <property type="protein sequence ID" value="CAA07113.1"/>
    <property type="molecule type" value="Genomic_DNA"/>
</dbReference>
<dbReference type="RefSeq" id="NP_047934.1">
    <property type="nucleotide sequence ID" value="NC_001978.3"/>
</dbReference>
<dbReference type="GeneID" id="2715880"/>
<dbReference type="KEGG" id="vg:2715880"/>
<dbReference type="OrthoDB" id="2266at10239"/>
<dbReference type="Proteomes" id="UP000002124">
    <property type="component" value="Genome"/>
</dbReference>
<dbReference type="GO" id="GO:0098003">
    <property type="term" value="P:viral tail assembly"/>
    <property type="evidence" value="ECO:0007669"/>
    <property type="project" value="UniProtKB-KW"/>
</dbReference>
<dbReference type="InterPro" id="IPR010090">
    <property type="entry name" value="Phage_tape_meas"/>
</dbReference>
<dbReference type="PANTHER" id="PTHR37813">
    <property type="entry name" value="FELS-2 PROPHAGE PROTEIN"/>
    <property type="match status" value="1"/>
</dbReference>
<dbReference type="PANTHER" id="PTHR37813:SF1">
    <property type="entry name" value="FELS-2 PROPHAGE PROTEIN"/>
    <property type="match status" value="1"/>
</dbReference>
<dbReference type="Pfam" id="PF10145">
    <property type="entry name" value="PhageMin_Tail"/>
    <property type="match status" value="1"/>
</dbReference>
<reference key="1">
    <citation type="journal article" date="1999" name="Nucleic Acids Res.">
        <title>The complete genome sequence of the Streptomyces temperate phage straight phiC31: evolutionary relationships to other viruses.</title>
        <authorList>
            <person name="Smith M.C."/>
            <person name="Burns R.N."/>
            <person name="Wilson S.E."/>
            <person name="Gregory M.A."/>
        </authorList>
    </citation>
    <scope>NUCLEOTIDE SEQUENCE [GENOMIC DNA]</scope>
    <source>
        <strain evidence="5">Norwich</strain>
    </source>
</reference>
<reference key="2">
    <citation type="journal article" date="1999" name="Proc. Natl. Acad. Sci. U.S.A.">
        <title>Evolutionary relationships among diverse bacteriophages and prophages: all the world's a phage.</title>
        <authorList>
            <person name="Hendrix R.W."/>
            <person name="Smith M.C.M."/>
            <person name="Burns N."/>
            <person name="Ford M.E."/>
            <person name="Hatfull G.F."/>
        </authorList>
    </citation>
    <scope>NUCLEOTIDE SEQUENCE [LARGE SCALE GENOMIC DNA]</scope>
    <source>
        <strain evidence="5">Norwich</strain>
    </source>
</reference>
<sequence length="729" mass="75480">MARPIQITIMGDADQLSETLDQASEEVSAFGEQAKGLALAAGGAIAVGIGAGIAEALEREAGNDVLAAQLGATPAEAKRLGEAAGEVYSAGYGESVADANEALKGLWQQGLVPAGATADDNGEHFEKAMDVATVLGDEVGPTSNAVGQMLKTGMAKNADEAFDILVRGAQEGANKSEDLLDTFNEYGVQFKGIGLDGKTAMGLLSQGLQGGARDADLVADSLKEFGLIVRAGGDEVNAAYKSMGLNGAEMTKAIAQGGPVAKDALDKTLDGLRKIKDPAERIATAVTLFGTQAEDMQDALLKLDPSSAVETLGKVDGAAKSAGETMHDNAATKIKAFTRGLQTGLVDFIGGTVLPILEKFKPALEGIGSTMATVGGFVSEHSTTFKVVAGIITAVLLPALIQWGVQSTINAGKAVVAWVTSSATAVIESTKQALAHAKVVAGWIASGVQAGLNAAKVVAGWVLMGAQSMIQGARMAAAWLLAMGPIPLIIAAIVGLVVLIVANWDKIWAYTKKVFQWLWDWVKKIFNWLEDLFLNFTGPGLLIKHWDKSRSATKNTFNNVKNFAKDALNAVVNFVKGLPGRILSAASSLLSAGKRIGGYVIDGIKNGLSKLGGFASSLASAVGRAAKGAINGVIDLLNWATPNKLGWGKLSIDLPDNPIPKIRAMGGPASGWTRVGERGPEDVFLPNGSTVRPNHALSGSGGVTVNVQTNADPFAIGREVAWALRTSPA</sequence>
<comment type="function">
    <text evidence="1">Serves as a base for tail tube protein polymerization and acts as a template for tail length determination.</text>
</comment>
<comment type="similarity">
    <text evidence="3">Belongs to the P2likevirus tape measure protein family.</text>
</comment>
<keyword id="KW-0175">Coiled coil</keyword>
<keyword id="KW-1185">Reference proteome</keyword>
<keyword id="KW-1188">Viral release from host cell</keyword>
<keyword id="KW-1245">Viral tail assembly</keyword>
<organism>
    <name type="scientific">Streptomyces phage phiC31</name>
    <name type="common">Bacteriophage phi-C31</name>
    <dbReference type="NCBI Taxonomy" id="10719"/>
    <lineage>
        <taxon>Viruses</taxon>
        <taxon>Duplodnaviria</taxon>
        <taxon>Heunggongvirae</taxon>
        <taxon>Uroviricota</taxon>
        <taxon>Caudoviricetes</taxon>
        <taxon>Lomovskayavirus</taxon>
    </lineage>
</organism>
<protein>
    <recommendedName>
        <fullName evidence="1">Probable tape measure protein</fullName>
        <shortName>TMP</shortName>
    </recommendedName>
    <alternativeName>
        <fullName evidence="3">Gene product 43</fullName>
        <shortName>gp43</shortName>
    </alternativeName>
</protein>
<accession>Q9ZXA5</accession>
<gene>
    <name evidence="4" type="primary">43</name>
</gene>
<organismHost>
    <name type="scientific">Streptomyces coelicolor</name>
    <dbReference type="NCBI Taxonomy" id="1902"/>
</organismHost>
<name>TMP_BPPHC</name>
<proteinExistence type="inferred from homology"/>
<evidence type="ECO:0000250" key="1">
    <source>
        <dbReference type="UniProtKB" id="O64314"/>
    </source>
</evidence>
<evidence type="ECO:0000255" key="2"/>
<evidence type="ECO:0000305" key="3"/>
<evidence type="ECO:0000312" key="4">
    <source>
        <dbReference type="EMBL" id="CAA07113.1"/>
    </source>
</evidence>
<evidence type="ECO:0000312" key="5">
    <source>
        <dbReference type="Proteomes" id="UP000002124"/>
    </source>
</evidence>
<feature type="chain" id="PRO_0000431944" description="Probable tape measure protein">
    <location>
        <begin position="1"/>
        <end position="729"/>
    </location>
</feature>
<feature type="coiled-coil region" evidence="2">
    <location>
        <begin position="9"/>
        <end position="35"/>
    </location>
</feature>